<gene>
    <name evidence="1" type="primary">htpX</name>
    <name type="ordered locus">RL4725</name>
</gene>
<dbReference type="EC" id="3.4.24.-" evidence="1"/>
<dbReference type="EMBL" id="AM236080">
    <property type="protein sequence ID" value="CAK10208.1"/>
    <property type="molecule type" value="Genomic_DNA"/>
</dbReference>
<dbReference type="RefSeq" id="WP_011654054.1">
    <property type="nucleotide sequence ID" value="NC_008380.1"/>
</dbReference>
<dbReference type="EnsemblBacteria" id="CAK10208">
    <property type="protein sequence ID" value="CAK10208"/>
    <property type="gene ID" value="RL4725"/>
</dbReference>
<dbReference type="KEGG" id="rle:RL4725"/>
<dbReference type="eggNOG" id="COG0501">
    <property type="taxonomic scope" value="Bacteria"/>
</dbReference>
<dbReference type="HOGENOM" id="CLU_042266_3_0_5"/>
<dbReference type="Proteomes" id="UP000006575">
    <property type="component" value="Chromosome"/>
</dbReference>
<dbReference type="GO" id="GO:0005886">
    <property type="term" value="C:plasma membrane"/>
    <property type="evidence" value="ECO:0007669"/>
    <property type="project" value="UniProtKB-SubCell"/>
</dbReference>
<dbReference type="GO" id="GO:0004222">
    <property type="term" value="F:metalloendopeptidase activity"/>
    <property type="evidence" value="ECO:0007669"/>
    <property type="project" value="UniProtKB-UniRule"/>
</dbReference>
<dbReference type="GO" id="GO:0008270">
    <property type="term" value="F:zinc ion binding"/>
    <property type="evidence" value="ECO:0007669"/>
    <property type="project" value="UniProtKB-UniRule"/>
</dbReference>
<dbReference type="GO" id="GO:0006508">
    <property type="term" value="P:proteolysis"/>
    <property type="evidence" value="ECO:0007669"/>
    <property type="project" value="UniProtKB-KW"/>
</dbReference>
<dbReference type="CDD" id="cd07336">
    <property type="entry name" value="M48B_HtpX_like"/>
    <property type="match status" value="1"/>
</dbReference>
<dbReference type="Gene3D" id="3.30.2010.10">
    <property type="entry name" value="Metalloproteases ('zincins'), catalytic domain"/>
    <property type="match status" value="1"/>
</dbReference>
<dbReference type="HAMAP" id="MF_00188">
    <property type="entry name" value="Pept_M48_protease_HtpX"/>
    <property type="match status" value="1"/>
</dbReference>
<dbReference type="InterPro" id="IPR050083">
    <property type="entry name" value="HtpX_protease"/>
</dbReference>
<dbReference type="InterPro" id="IPR022919">
    <property type="entry name" value="Pept_M48_protease_HtpX"/>
</dbReference>
<dbReference type="InterPro" id="IPR001915">
    <property type="entry name" value="Peptidase_M48"/>
</dbReference>
<dbReference type="NCBIfam" id="NF002363">
    <property type="entry name" value="PRK01345.1"/>
    <property type="match status" value="1"/>
</dbReference>
<dbReference type="NCBIfam" id="NF002826">
    <property type="entry name" value="PRK03001.1"/>
    <property type="match status" value="1"/>
</dbReference>
<dbReference type="PANTHER" id="PTHR43221">
    <property type="entry name" value="PROTEASE HTPX"/>
    <property type="match status" value="1"/>
</dbReference>
<dbReference type="PANTHER" id="PTHR43221:SF1">
    <property type="entry name" value="PROTEASE HTPX"/>
    <property type="match status" value="1"/>
</dbReference>
<dbReference type="Pfam" id="PF01435">
    <property type="entry name" value="Peptidase_M48"/>
    <property type="match status" value="1"/>
</dbReference>
<dbReference type="PROSITE" id="PS00142">
    <property type="entry name" value="ZINC_PROTEASE"/>
    <property type="match status" value="1"/>
</dbReference>
<organism>
    <name type="scientific">Rhizobium johnstonii (strain DSM 114642 / LMG 32736 / 3841)</name>
    <name type="common">Rhizobium leguminosarum bv. viciae</name>
    <dbReference type="NCBI Taxonomy" id="216596"/>
    <lineage>
        <taxon>Bacteria</taxon>
        <taxon>Pseudomonadati</taxon>
        <taxon>Pseudomonadota</taxon>
        <taxon>Alphaproteobacteria</taxon>
        <taxon>Hyphomicrobiales</taxon>
        <taxon>Rhizobiaceae</taxon>
        <taxon>Rhizobium/Agrobacterium group</taxon>
        <taxon>Rhizobium</taxon>
        <taxon>Rhizobium johnstonii</taxon>
    </lineage>
</organism>
<sequence>MNLVRTAMLLAFMTALFMFVGFLIGGRAGMMIAFVIAAGMNFFSYWNSDRMVLSAYRAQQVDERNAPEFFRIVRDLARNAGLPMPKVYLYDSPQPNAFATGRNPENAAVAASTGLLSALSAEEVAGVMAHELAHIQNRDTLTMTITATLAGAISMLGNFAFFFGGNRENNSNPLGFVGVIVAMIVAPLAAMLVQMAISRTREYSADRRGAEICGNPLWLASALGKIARGAAHVPNEDAERNPATAHMFIINPLSGERMDNLFSTHPNTENRIAALHDMAQSGMNVSTSPARAANPSRKSRSVPDTGLGRGGSQPPKGPWS</sequence>
<proteinExistence type="inferred from homology"/>
<name>HTPX_RHIJ3</name>
<feature type="chain" id="PRO_1000020922" description="Protease HtpX homolog">
    <location>
        <begin position="1"/>
        <end position="320"/>
    </location>
</feature>
<feature type="transmembrane region" description="Helical" evidence="1">
    <location>
        <begin position="6"/>
        <end position="26"/>
    </location>
</feature>
<feature type="transmembrane region" description="Helical" evidence="1">
    <location>
        <begin position="28"/>
        <end position="48"/>
    </location>
</feature>
<feature type="transmembrane region" description="Helical" evidence="1">
    <location>
        <begin position="145"/>
        <end position="165"/>
    </location>
</feature>
<feature type="transmembrane region" description="Helical" evidence="1">
    <location>
        <begin position="173"/>
        <end position="193"/>
    </location>
</feature>
<feature type="region of interest" description="Disordered" evidence="2">
    <location>
        <begin position="283"/>
        <end position="320"/>
    </location>
</feature>
<feature type="active site" evidence="1">
    <location>
        <position position="131"/>
    </location>
</feature>
<feature type="binding site" evidence="1">
    <location>
        <position position="130"/>
    </location>
    <ligand>
        <name>Zn(2+)</name>
        <dbReference type="ChEBI" id="CHEBI:29105"/>
        <note>catalytic</note>
    </ligand>
</feature>
<feature type="binding site" evidence="1">
    <location>
        <position position="134"/>
    </location>
    <ligand>
        <name>Zn(2+)</name>
        <dbReference type="ChEBI" id="CHEBI:29105"/>
        <note>catalytic</note>
    </ligand>
</feature>
<feature type="binding site" evidence="1">
    <location>
        <position position="202"/>
    </location>
    <ligand>
        <name>Zn(2+)</name>
        <dbReference type="ChEBI" id="CHEBI:29105"/>
        <note>catalytic</note>
    </ligand>
</feature>
<accession>Q1MA32</accession>
<protein>
    <recommendedName>
        <fullName evidence="1">Protease HtpX homolog</fullName>
        <ecNumber evidence="1">3.4.24.-</ecNumber>
    </recommendedName>
</protein>
<evidence type="ECO:0000255" key="1">
    <source>
        <dbReference type="HAMAP-Rule" id="MF_00188"/>
    </source>
</evidence>
<evidence type="ECO:0000256" key="2">
    <source>
        <dbReference type="SAM" id="MobiDB-lite"/>
    </source>
</evidence>
<keyword id="KW-0997">Cell inner membrane</keyword>
<keyword id="KW-1003">Cell membrane</keyword>
<keyword id="KW-0378">Hydrolase</keyword>
<keyword id="KW-0472">Membrane</keyword>
<keyword id="KW-0479">Metal-binding</keyword>
<keyword id="KW-0482">Metalloprotease</keyword>
<keyword id="KW-0645">Protease</keyword>
<keyword id="KW-0812">Transmembrane</keyword>
<keyword id="KW-1133">Transmembrane helix</keyword>
<keyword id="KW-0862">Zinc</keyword>
<comment type="cofactor">
    <cofactor evidence="1">
        <name>Zn(2+)</name>
        <dbReference type="ChEBI" id="CHEBI:29105"/>
    </cofactor>
    <text evidence="1">Binds 1 zinc ion per subunit.</text>
</comment>
<comment type="subcellular location">
    <subcellularLocation>
        <location evidence="1">Cell inner membrane</location>
        <topology evidence="1">Multi-pass membrane protein</topology>
    </subcellularLocation>
</comment>
<comment type="similarity">
    <text evidence="1">Belongs to the peptidase M48B family.</text>
</comment>
<reference key="1">
    <citation type="journal article" date="2006" name="Genome Biol.">
        <title>The genome of Rhizobium leguminosarum has recognizable core and accessory components.</title>
        <authorList>
            <person name="Young J.P.W."/>
            <person name="Crossman L.C."/>
            <person name="Johnston A.W.B."/>
            <person name="Thomson N.R."/>
            <person name="Ghazoui Z.F."/>
            <person name="Hull K.H."/>
            <person name="Wexler M."/>
            <person name="Curson A.R.J."/>
            <person name="Todd J.D."/>
            <person name="Poole P.S."/>
            <person name="Mauchline T.H."/>
            <person name="East A.K."/>
            <person name="Quail M.A."/>
            <person name="Churcher C."/>
            <person name="Arrowsmith C."/>
            <person name="Cherevach I."/>
            <person name="Chillingworth T."/>
            <person name="Clarke K."/>
            <person name="Cronin A."/>
            <person name="Davis P."/>
            <person name="Fraser A."/>
            <person name="Hance Z."/>
            <person name="Hauser H."/>
            <person name="Jagels K."/>
            <person name="Moule S."/>
            <person name="Mungall K."/>
            <person name="Norbertczak H."/>
            <person name="Rabbinowitsch E."/>
            <person name="Sanders M."/>
            <person name="Simmonds M."/>
            <person name="Whitehead S."/>
            <person name="Parkhill J."/>
        </authorList>
    </citation>
    <scope>NUCLEOTIDE SEQUENCE [LARGE SCALE GENOMIC DNA]</scope>
    <source>
        <strain>DSM 114642 / LMG 32736 / 3841</strain>
    </source>
</reference>